<sequence length="617" mass="69174">MSPQRDRINAFYKDNPHPKGSRIVINREHLMIDRPYVLLAVLFVMFLSLIGLLAIAGIRLHRAAIYTAEIHKSLSTNLDVTNSIEHQVKDVLTPLFKIIGDEVGLRTPQRFTDLVKFISDKIKFLNPDREYDFRDLTWCINPPERIKLDYDQYCADVAAEELMNALVNSTLLEARATNQFLAVSKGNCSGPTTIRGQFSNMSLSLLDLYLSRGYNVSSIVTMTSQGMYGGTYLVGKPNLSSKGSELSQLSMHRVFEVGVIRNPGLGAPVFHMTNYFEQPVSNDFSNCMVALGELKFAALCHREDSITIPYQGSGKGVSFQLVKLGVWKSPTDMRSWVPLSTDDPVIDRLYLSSHRGVIADNQAKWAVPTTRTDDKLRMETCFQQACKGKNQALCENPEWAPLKDNRIPSYGVLSVNLSLTVELKIKIASGFGPLITHGSGMDLYKTNHNNVYWLTIPPMKNLALGVINTLEWIPRFKVSPNLFTVPIKEAGEDCHAPTYLPAEVDGDVKLSSNLVILPGQDLQYVLATYDTSRVEHAVVYYVYSPSRSFSYFYPFRLPIKGVPIELQVECFTWDKKLWCRHFCVLADSESGGHITHSGMVGMGVSCTVTREDGTNRR</sequence>
<organismHost>
    <name type="scientific">Homo sapiens</name>
    <name type="common">Human</name>
    <dbReference type="NCBI Taxonomy" id="9606"/>
</organismHost>
<comment type="function">
    <text evidence="2 4 5 8 10">Attaches the virus to the human SLAMF1/CD150 receptor for entry into host dendritic cells, macrophages, activated memory T cells and naive or memory B cells, thereby explaining the long immunosuppression that follows infection (By similarity). In the respiratory airways, binds to the NECTIN4 receptor for entry into the host cell (PubMed:22048310). During viral entry or virus-mediated fusion between infected cells and neighboring susceptible cells, the head domain of the H protein initially binds to its receptor and then the stalk region of the H protein transmits the fusion-triggering signal to the F protein (PubMed:23027974). Unilateral receptor binding to only one of the covalently linked dimer pairs in the H tetramer is sufficient for F triggering (PubMed:23027974). In case of neuropathogenic strains, host CADM1 (isoform 5) and CADM2 (isoform 5) can interact with measles hemagglutinin to trigger hyperfusogenic F-mediated membrane fusion and presumably transsynaptic cell-to-cell transmission of the virus (PubMed:29298883, PubMed:37166307).</text>
</comment>
<comment type="subunit">
    <text evidence="2 4 5 6 7">Homodimer; disulfide-linked (PubMed:23027974, PubMed:23202587, PubMed:24648460). Further forms homotetramer (dimer of dimers) (PubMed:23027974, PubMed:24648460). Interacts (via C-terminus) with human NECTIN4 (via N-terminus); this interaction allows attachment to the respiratory epithelium and viral entry (PubMed:22048310, PubMed:23202587). Interacts (via C-terminus) with human SLAMF1/CD150 (via N-terminus); this interaction allows attachment and viral entry into the CD150-expressing immune cells (By similarity).</text>
</comment>
<comment type="interaction">
    <interactant intactId="EBI-5323300">
        <id>Q786F2</id>
    </interactant>
    <interactant intactId="EBI-4314784">
        <id>Q96NY8</id>
        <label>NECTIN4</label>
    </interactant>
    <organismsDiffer>true</organismsDiffer>
    <experiments>4</experiments>
</comment>
<comment type="interaction">
    <interactant intactId="EBI-5323300">
        <id>Q786F2</id>
    </interactant>
    <interactant intactId="EBI-4315002">
        <id>Q13291</id>
        <label>SLAMF1</label>
    </interactant>
    <organismsDiffer>true</organismsDiffer>
    <experiments>2</experiments>
</comment>
<comment type="subcellular location">
    <subcellularLocation>
        <location evidence="11">Virion membrane</location>
        <topology evidence="11">Single-pass type II membrane protein</topology>
    </subcellularLocation>
    <subcellularLocation>
        <location evidence="1">Host cell membrane</location>
        <topology evidence="1">Single-pass type II membrane protein</topology>
    </subcellularLocation>
</comment>
<comment type="miscellaneous">
    <text evidence="9">Infecting host innate immune cells allows the virus to disseminate from the upper respiratory tract to lymphoid organs, and later back to the respiratory tract.</text>
</comment>
<comment type="similarity">
    <text evidence="11">Belongs to the paramyxoviruses hemagglutinin-neuraminidase family. Non-sialidase subfamily.</text>
</comment>
<comment type="caution">
    <text evidence="11">Morbiliviruses hemagglutinins have no neuraminidase activity.</text>
</comment>
<name>HEMA_MEASC</name>
<reference key="1">
    <citation type="journal article" date="2000" name="Virus Genes">
        <title>Comparative nucleotide sequence analyses of the entire genomes of B95a cell-isolated and vero cell-isolated measles viruses from the same patient.</title>
        <authorList>
            <person name="Takeuchi K."/>
            <person name="Miyajima N."/>
            <person name="Kobune F."/>
            <person name="Tashiro M."/>
        </authorList>
    </citation>
    <scope>NUCLEOTIDE SEQUENCE [GENOMIC RNA]</scope>
</reference>
<reference key="2">
    <citation type="journal article" date="2011" name="Nature">
        <title>Adherens junction protein nectin-4 is the epithelial receptor for measles virus.</title>
        <authorList>
            <person name="Muhlebach M.D."/>
            <person name="Mateo M."/>
            <person name="Sinn P.L."/>
            <person name="Prufer S."/>
            <person name="Uhlig K.M."/>
            <person name="Leonard V.H."/>
            <person name="Navaratnarajah C.K."/>
            <person name="Frenzke M."/>
            <person name="Wong X.X."/>
            <person name="Sawatsky B."/>
            <person name="Ramachandran S."/>
            <person name="McCray P.B. Jr."/>
            <person name="Cichutek K."/>
            <person name="von Messling V."/>
            <person name="Lopez M."/>
            <person name="Cattaneo R."/>
        </authorList>
    </citation>
    <scope>INTERACTION WITH HUMAN NECTIN4</scope>
    <scope>FUNCTION</scope>
</reference>
<reference key="3">
    <citation type="journal article" date="2012" name="Proc. Natl. Acad. Sci. U.S.A.">
        <title>Triggering the measles virus membrane fusion machinery.</title>
        <authorList>
            <person name="Brindley M.A."/>
            <person name="Takeda M."/>
            <person name="Plattet P."/>
            <person name="Plemper R.K."/>
        </authorList>
    </citation>
    <scope>FUNCTION</scope>
    <scope>SUBUNIT</scope>
</reference>
<reference key="4">
    <citation type="journal article" date="2014" name="J. Virol.">
        <title>The measles virus hemagglutinin stalk: structures and functions of the central fusion activation and membrane-proximal segments.</title>
        <authorList>
            <person name="Navaratnarajah C.K."/>
            <person name="Kumar S."/>
            <person name="Generous A."/>
            <person name="Apte-Sengupta S."/>
            <person name="Mateo M."/>
            <person name="Cattaneo R."/>
        </authorList>
    </citation>
    <scope>MUTAGENESIS OF CYS-139 AND CYS-154</scope>
    <scope>SUBUNIT</scope>
</reference>
<reference key="5">
    <citation type="journal article" date="2018" name="J. Virol.">
        <title>Cell-to-Cell Measles Virus Spread between Human Neurons Is Dependent on Hemagglutinin and Hyperfusogenic Fusion Protein.</title>
        <authorList>
            <person name="Sato Y."/>
            <person name="Watanabe S."/>
            <person name="Fukuda Y."/>
            <person name="Hashiguchi T."/>
            <person name="Yanagi Y."/>
            <person name="Ohno S."/>
        </authorList>
    </citation>
    <scope>FUNCTION</scope>
</reference>
<reference key="6">
    <citation type="journal article" date="2020" name="Curr. Opin. Virol.">
        <title>Seek and hide: the manipulating interplay of measles virus with the innate immune system.</title>
        <authorList>
            <person name="Ayasoufi K."/>
            <person name="Pfaller C.K."/>
        </authorList>
    </citation>
    <scope>REVIEW</scope>
</reference>
<reference key="7">
    <citation type="journal article" date="2023" name="J. Virol.">
        <title>Interaction of the Hemagglutinin Stalk Region with Cell Adhesion Molecule (CADM) 1 and CADM2 Mediates the Spread between Neurons and Neuropathogenicity of Measles Virus with a Hyperfusogenic Fusion Protein.</title>
        <authorList>
            <person name="Takemoto R."/>
            <person name="Hirai Y."/>
            <person name="Watanabe S."/>
            <person name="Harada H."/>
            <person name="Suzuki T."/>
            <person name="Hashiguchi T."/>
            <person name="Yanagi Y."/>
            <person name="Shirogane Y."/>
        </authorList>
    </citation>
    <scope>FUNCTION</scope>
    <source>
        <strain>IC-B</strain>
    </source>
</reference>
<reference evidence="12" key="8">
    <citation type="journal article" date="2013" name="Nat. Struct. Mol. Biol.">
        <title>Structure of measles virus hemagglutinin bound to its epithelial receptor nectin-4.</title>
        <authorList>
            <person name="Zhang X."/>
            <person name="Lu G."/>
            <person name="Qi J."/>
            <person name="Li Y."/>
            <person name="He Y."/>
            <person name="Xu X."/>
            <person name="Shi J."/>
            <person name="Zhang C.W."/>
            <person name="Yan J."/>
            <person name="Gao G.F."/>
        </authorList>
    </citation>
    <scope>X-RAY CRYSTALLOGRAPHY (3.10 ANGSTROMS) OF 156-617 IN COMPLEX WITH HUMAN NECTIN4</scope>
    <scope>GLYCOSYLATION AT ASN-416</scope>
    <scope>INTERACTION WITH HUMAN NECTIN4</scope>
    <scope>SUBUNIT</scope>
</reference>
<proteinExistence type="evidence at protein level"/>
<gene>
    <name type="primary">H</name>
</gene>
<feature type="chain" id="PRO_0000394712" description="Hemagglutinin glycoprotein">
    <location>
        <begin position="1"/>
        <end position="617"/>
    </location>
</feature>
<feature type="topological domain" description="Intravirion" evidence="3">
    <location>
        <begin position="1"/>
        <end position="37"/>
    </location>
</feature>
<feature type="transmembrane region" description="Helical; Note=Membrane anchor" evidence="3">
    <location>
        <begin position="38"/>
        <end position="58"/>
    </location>
</feature>
<feature type="topological domain" description="Virion surface" evidence="3">
    <location>
        <begin position="59"/>
        <end position="617"/>
    </location>
</feature>
<feature type="region of interest" description="Stalk" evidence="2">
    <location>
        <begin position="1"/>
        <end position="154"/>
    </location>
</feature>
<feature type="region of interest" description="Involved in cell-to-cell fusion dependent on CADM1, CADM2, and NECTIN4" evidence="10">
    <location>
        <begin position="171"/>
        <end position="175"/>
    </location>
</feature>
<feature type="region of interest" description="Interaction with host NECTIN4 receptor" evidence="6">
    <location>
        <begin position="458"/>
        <end position="543"/>
    </location>
</feature>
<feature type="site" description="Interaction with host SLAMF1 receptor" evidence="2">
    <location>
        <position position="483"/>
    </location>
</feature>
<feature type="site" description="Interaction with host SLAMF1 receptor" evidence="2">
    <location>
        <position position="505"/>
    </location>
</feature>
<feature type="site" description="Interaction with host SLAMF1 receptor" evidence="2">
    <location>
        <position position="507"/>
    </location>
</feature>
<feature type="site" description="Interaction with host SLAMF1 receptor" evidence="2">
    <location>
        <position position="524"/>
    </location>
</feature>
<feature type="site" description="Interaction with host SLAMF1 receptor" evidence="2">
    <location>
        <position position="530"/>
    </location>
</feature>
<feature type="site" description="Interaction with host SLAMF1 receptor" evidence="2">
    <location>
        <position position="533"/>
    </location>
</feature>
<feature type="site" description="Interaction with host SLAMF1 receptor" evidence="2">
    <location>
        <position position="541"/>
    </location>
</feature>
<feature type="site" description="Interaction with host SLAMF1 receptor" evidence="2">
    <location>
        <position position="543"/>
    </location>
</feature>
<feature type="site" description="Interaction with host SLAMF1 receptor" evidence="2">
    <location>
        <position position="545"/>
    </location>
</feature>
<feature type="site" description="Interaction with host SLAMF1 receptor" evidence="2">
    <location>
        <position position="552"/>
    </location>
</feature>
<feature type="site" description="Interaction with host SLAMF1 receptor" evidence="2">
    <location>
        <position position="554"/>
    </location>
</feature>
<feature type="glycosylation site" description="N-linked (GlcNAc...) asparagine; by host" evidence="3">
    <location>
        <position position="168"/>
    </location>
</feature>
<feature type="glycosylation site" description="N-linked (GlcNAc...) asparagine; by host" evidence="3">
    <location>
        <position position="187"/>
    </location>
</feature>
<feature type="glycosylation site" description="N-linked (GlcNAc...) asparagine; by host" evidence="3">
    <location>
        <position position="200"/>
    </location>
</feature>
<feature type="glycosylation site" description="N-linked (GlcNAc...) asparagine; by host" evidence="3">
    <location>
        <position position="215"/>
    </location>
</feature>
<feature type="glycosylation site" description="N-linked (GlcNAc...) asparagine; by host" evidence="3">
    <location>
        <position position="238"/>
    </location>
</feature>
<feature type="glycosylation site" description="N-linked (GlcNAc...) asparagine; by host" evidence="12">
    <location>
        <position position="416"/>
    </location>
</feature>
<feature type="disulfide bond" description="Interchain" evidence="2">
    <location>
        <position position="139"/>
    </location>
</feature>
<feature type="disulfide bond" description="Interchain" evidence="2">
    <location>
        <position position="154"/>
    </location>
</feature>
<feature type="disulfide bond" evidence="2">
    <location>
        <begin position="188"/>
        <end position="606"/>
    </location>
</feature>
<feature type="disulfide bond" evidence="2">
    <location>
        <begin position="287"/>
        <end position="300"/>
    </location>
</feature>
<feature type="disulfide bond" evidence="2">
    <location>
        <begin position="381"/>
        <end position="494"/>
    </location>
</feature>
<feature type="disulfide bond" evidence="2">
    <location>
        <begin position="386"/>
        <end position="394"/>
    </location>
</feature>
<feature type="disulfide bond" evidence="2">
    <location>
        <begin position="570"/>
        <end position="579"/>
    </location>
</feature>
<feature type="mutagenesis site" description="Complete loss of dimerization and tetramerization; when associated with A-154." evidence="7">
    <original>C</original>
    <variation>A</variation>
    <location>
        <position position="139"/>
    </location>
</feature>
<feature type="mutagenesis site" description="Complete loss of dimerization and tetramerization; when associated with A-139." evidence="7">
    <original>C</original>
    <variation>A</variation>
    <location>
        <position position="154"/>
    </location>
</feature>
<feature type="helix" evidence="13">
    <location>
        <begin position="157"/>
        <end position="159"/>
    </location>
</feature>
<feature type="helix" evidence="13">
    <location>
        <begin position="162"/>
        <end position="165"/>
    </location>
</feature>
<feature type="strand" evidence="13">
    <location>
        <begin position="194"/>
        <end position="198"/>
    </location>
</feature>
<feature type="helix" evidence="13">
    <location>
        <begin position="206"/>
        <end position="211"/>
    </location>
</feature>
<feature type="strand" evidence="13">
    <location>
        <begin position="215"/>
        <end position="224"/>
    </location>
</feature>
<feature type="strand" evidence="13">
    <location>
        <begin position="227"/>
        <end position="237"/>
    </location>
</feature>
<feature type="strand" evidence="13">
    <location>
        <begin position="249"/>
        <end position="261"/>
    </location>
</feature>
<feature type="strand" evidence="13">
    <location>
        <begin position="264"/>
        <end position="267"/>
    </location>
</feature>
<feature type="strand" evidence="13">
    <location>
        <begin position="269"/>
        <end position="279"/>
    </location>
</feature>
<feature type="strand" evidence="13">
    <location>
        <begin position="281"/>
        <end position="283"/>
    </location>
</feature>
<feature type="strand" evidence="13">
    <location>
        <begin position="287"/>
        <end position="291"/>
    </location>
</feature>
<feature type="strand" evidence="13">
    <location>
        <begin position="296"/>
        <end position="300"/>
    </location>
</feature>
<feature type="strand" evidence="13">
    <location>
        <begin position="304"/>
        <end position="307"/>
    </location>
</feature>
<feature type="strand" evidence="13">
    <location>
        <begin position="318"/>
        <end position="324"/>
    </location>
</feature>
<feature type="strand" evidence="13">
    <location>
        <begin position="333"/>
        <end position="339"/>
    </location>
</feature>
<feature type="strand" evidence="13">
    <location>
        <begin position="346"/>
        <end position="350"/>
    </location>
</feature>
<feature type="strand" evidence="13">
    <location>
        <begin position="355"/>
        <end position="359"/>
    </location>
</feature>
<feature type="strand" evidence="13">
    <location>
        <begin position="362"/>
        <end position="372"/>
    </location>
</feature>
<feature type="helix" evidence="13">
    <location>
        <begin position="374"/>
        <end position="384"/>
    </location>
</feature>
<feature type="turn" evidence="13">
    <location>
        <begin position="389"/>
        <end position="393"/>
    </location>
</feature>
<feature type="strand" evidence="13">
    <location>
        <begin position="394"/>
        <end position="396"/>
    </location>
</feature>
<feature type="helix" evidence="13">
    <location>
        <begin position="400"/>
        <end position="403"/>
    </location>
</feature>
<feature type="strand" evidence="13">
    <location>
        <begin position="408"/>
        <end position="416"/>
    </location>
</feature>
<feature type="strand" evidence="13">
    <location>
        <begin position="418"/>
        <end position="421"/>
    </location>
</feature>
<feature type="strand" evidence="13">
    <location>
        <begin position="425"/>
        <end position="430"/>
    </location>
</feature>
<feature type="strand" evidence="13">
    <location>
        <begin position="442"/>
        <end position="445"/>
    </location>
</feature>
<feature type="strand" evidence="13">
    <location>
        <begin position="451"/>
        <end position="456"/>
    </location>
</feature>
<feature type="turn" evidence="13">
    <location>
        <begin position="460"/>
        <end position="462"/>
    </location>
</feature>
<feature type="strand" evidence="13">
    <location>
        <begin position="466"/>
        <end position="471"/>
    </location>
</feature>
<feature type="strand" evidence="13">
    <location>
        <begin position="482"/>
        <end position="486"/>
    </location>
</feature>
<feature type="strand" evidence="13">
    <location>
        <begin position="495"/>
        <end position="497"/>
    </location>
</feature>
<feature type="strand" evidence="13">
    <location>
        <begin position="508"/>
        <end position="511"/>
    </location>
</feature>
<feature type="strand" evidence="13">
    <location>
        <begin position="515"/>
        <end position="517"/>
    </location>
</feature>
<feature type="strand" evidence="13">
    <location>
        <begin position="519"/>
        <end position="521"/>
    </location>
</feature>
<feature type="strand" evidence="13">
    <location>
        <begin position="523"/>
        <end position="531"/>
    </location>
</feature>
<feature type="strand" evidence="13">
    <location>
        <begin position="537"/>
        <end position="543"/>
    </location>
</feature>
<feature type="strand" evidence="13">
    <location>
        <begin position="548"/>
        <end position="551"/>
    </location>
</feature>
<feature type="strand" evidence="13">
    <location>
        <begin position="563"/>
        <end position="565"/>
    </location>
</feature>
<feature type="strand" evidence="13">
    <location>
        <begin position="568"/>
        <end position="573"/>
    </location>
</feature>
<feature type="strand" evidence="13">
    <location>
        <begin position="576"/>
        <end position="585"/>
    </location>
</feature>
<feature type="strand" evidence="13">
    <location>
        <begin position="588"/>
        <end position="590"/>
    </location>
</feature>
<feature type="strand" evidence="13">
    <location>
        <begin position="594"/>
        <end position="604"/>
    </location>
</feature>
<protein>
    <recommendedName>
        <fullName>Hemagglutinin glycoprotein</fullName>
    </recommendedName>
</protein>
<keyword id="KW-0002">3D-structure</keyword>
<keyword id="KW-1015">Disulfide bond</keyword>
<keyword id="KW-0325">Glycoprotein</keyword>
<keyword id="KW-0348">Hemagglutinin</keyword>
<keyword id="KW-1032">Host cell membrane</keyword>
<keyword id="KW-1043">Host membrane</keyword>
<keyword id="KW-0945">Host-virus interaction</keyword>
<keyword id="KW-0472">Membrane</keyword>
<keyword id="KW-1185">Reference proteome</keyword>
<keyword id="KW-0735">Signal-anchor</keyword>
<keyword id="KW-0812">Transmembrane</keyword>
<keyword id="KW-1133">Transmembrane helix</keyword>
<keyword id="KW-1161">Viral attachment to host cell</keyword>
<keyword id="KW-0261">Viral envelope protein</keyword>
<keyword id="KW-0946">Virion</keyword>
<keyword id="KW-1160">Virus entry into host cell</keyword>
<organism>
    <name type="scientific">Measles virus (strain Ichinose-B95a)</name>
    <name type="common">MeV</name>
    <name type="synonym">Subacute sclerose panencephalitis virus</name>
    <dbReference type="NCBI Taxonomy" id="645098"/>
    <lineage>
        <taxon>Viruses</taxon>
        <taxon>Riboviria</taxon>
        <taxon>Orthornavirae</taxon>
        <taxon>Negarnaviricota</taxon>
        <taxon>Haploviricotina</taxon>
        <taxon>Monjiviricetes</taxon>
        <taxon>Mononegavirales</taxon>
        <taxon>Paramyxoviridae</taxon>
        <taxon>Orthoparamyxovirinae</taxon>
        <taxon>Morbillivirus</taxon>
        <taxon>Morbillivirus hominis</taxon>
        <taxon>Measles morbillivirus</taxon>
    </lineage>
</organism>
<accession>Q786F2</accession>
<dbReference type="EMBL" id="AB016162">
    <property type="protein sequence ID" value="BAA34982.1"/>
    <property type="molecule type" value="Genomic_RNA"/>
</dbReference>
<dbReference type="PIR" id="PQ0377">
    <property type="entry name" value="PQ0377"/>
</dbReference>
<dbReference type="PIR" id="PQ0381">
    <property type="entry name" value="PQ0381"/>
</dbReference>
<dbReference type="RefSeq" id="NP_056923.1">
    <property type="nucleotide sequence ID" value="NC_001498.1"/>
</dbReference>
<dbReference type="PDB" id="4GJT">
    <property type="method" value="X-ray"/>
    <property type="resolution" value="3.10 A"/>
    <property type="chains" value="A=156-617"/>
</dbReference>
<dbReference type="PDBsum" id="4GJT"/>
<dbReference type="SMR" id="Q786F2"/>
<dbReference type="DIP" id="DIP-59438N"/>
<dbReference type="IntAct" id="Q786F2">
    <property type="interactions" value="3"/>
</dbReference>
<dbReference type="GlyCosmos" id="Q786F2">
    <property type="glycosylation" value="6 sites, No reported glycans"/>
</dbReference>
<dbReference type="GeneID" id="1489801"/>
<dbReference type="KEGG" id="vg:1489801"/>
<dbReference type="Proteomes" id="UP000008699">
    <property type="component" value="Segment"/>
</dbReference>
<dbReference type="GO" id="GO:0020002">
    <property type="term" value="C:host cell plasma membrane"/>
    <property type="evidence" value="ECO:0007669"/>
    <property type="project" value="UniProtKB-SubCell"/>
</dbReference>
<dbReference type="GO" id="GO:0016020">
    <property type="term" value="C:membrane"/>
    <property type="evidence" value="ECO:0007669"/>
    <property type="project" value="UniProtKB-KW"/>
</dbReference>
<dbReference type="GO" id="GO:0019031">
    <property type="term" value="C:viral envelope"/>
    <property type="evidence" value="ECO:0007669"/>
    <property type="project" value="UniProtKB-KW"/>
</dbReference>
<dbReference type="GO" id="GO:0055036">
    <property type="term" value="C:virion membrane"/>
    <property type="evidence" value="ECO:0007669"/>
    <property type="project" value="UniProtKB-SubCell"/>
</dbReference>
<dbReference type="GO" id="GO:0046789">
    <property type="term" value="F:host cell surface receptor binding"/>
    <property type="evidence" value="ECO:0007669"/>
    <property type="project" value="InterPro"/>
</dbReference>
<dbReference type="GO" id="GO:0046718">
    <property type="term" value="P:symbiont entry into host cell"/>
    <property type="evidence" value="ECO:0007669"/>
    <property type="project" value="UniProtKB-KW"/>
</dbReference>
<dbReference type="GO" id="GO:0019062">
    <property type="term" value="P:virion attachment to host cell"/>
    <property type="evidence" value="ECO:0000314"/>
    <property type="project" value="UniProtKB"/>
</dbReference>
<dbReference type="CDD" id="cd15467">
    <property type="entry name" value="MV-h"/>
    <property type="match status" value="1"/>
</dbReference>
<dbReference type="FunFam" id="2.120.10.10:FF:000007">
    <property type="entry name" value="Hemagglutinin glycoprotein"/>
    <property type="match status" value="1"/>
</dbReference>
<dbReference type="Gene3D" id="2.120.10.10">
    <property type="match status" value="1"/>
</dbReference>
<dbReference type="InterPro" id="IPR000665">
    <property type="entry name" value="Hemagglutn/HN"/>
</dbReference>
<dbReference type="InterPro" id="IPR049617">
    <property type="entry name" value="MV-h_C"/>
</dbReference>
<dbReference type="InterPro" id="IPR036278">
    <property type="entry name" value="Sialidase_sf"/>
</dbReference>
<dbReference type="Pfam" id="PF00423">
    <property type="entry name" value="HN"/>
    <property type="match status" value="1"/>
</dbReference>
<dbReference type="SUPFAM" id="SSF50939">
    <property type="entry name" value="Sialidases"/>
    <property type="match status" value="1"/>
</dbReference>
<evidence type="ECO:0000250" key="1"/>
<evidence type="ECO:0000250" key="2">
    <source>
        <dbReference type="UniProtKB" id="P08362"/>
    </source>
</evidence>
<evidence type="ECO:0000255" key="3"/>
<evidence type="ECO:0000269" key="4">
    <source>
    </source>
</evidence>
<evidence type="ECO:0000269" key="5">
    <source>
    </source>
</evidence>
<evidence type="ECO:0000269" key="6">
    <source>
    </source>
</evidence>
<evidence type="ECO:0000269" key="7">
    <source>
    </source>
</evidence>
<evidence type="ECO:0000269" key="8">
    <source>
    </source>
</evidence>
<evidence type="ECO:0000269" key="9">
    <source>
    </source>
</evidence>
<evidence type="ECO:0000269" key="10">
    <source>
    </source>
</evidence>
<evidence type="ECO:0000305" key="11"/>
<evidence type="ECO:0007744" key="12">
    <source>
        <dbReference type="PDB" id="4GJT"/>
    </source>
</evidence>
<evidence type="ECO:0007829" key="13">
    <source>
        <dbReference type="PDB" id="4GJT"/>
    </source>
</evidence>